<reference key="1">
    <citation type="submission" date="2006-12" db="EMBL/GenBank/DDBJ databases">
        <title>Complete sequence of Shewanella amazonensis SB2B.</title>
        <authorList>
            <consortium name="US DOE Joint Genome Institute"/>
            <person name="Copeland A."/>
            <person name="Lucas S."/>
            <person name="Lapidus A."/>
            <person name="Barry K."/>
            <person name="Detter J.C."/>
            <person name="Glavina del Rio T."/>
            <person name="Hammon N."/>
            <person name="Israni S."/>
            <person name="Dalin E."/>
            <person name="Tice H."/>
            <person name="Pitluck S."/>
            <person name="Munk A.C."/>
            <person name="Brettin T."/>
            <person name="Bruce D."/>
            <person name="Han C."/>
            <person name="Tapia R."/>
            <person name="Gilna P."/>
            <person name="Schmutz J."/>
            <person name="Larimer F."/>
            <person name="Land M."/>
            <person name="Hauser L."/>
            <person name="Kyrpides N."/>
            <person name="Mikhailova N."/>
            <person name="Fredrickson J."/>
            <person name="Richardson P."/>
        </authorList>
    </citation>
    <scope>NUCLEOTIDE SEQUENCE [LARGE SCALE GENOMIC DNA]</scope>
    <source>
        <strain>ATCC BAA-1098 / SB2B</strain>
    </source>
</reference>
<proteinExistence type="inferred from homology"/>
<sequence>MSDVVQDELSKKQTTRLNKLQKRLRREVGSAIADYNMIEEGDRVMCCLSGGKDSYAMLDILINLQQRAPVSFEIVAVNLDQKQPGFPEHVLPAYLETLGVPFHILEKDTYSIVKDKIPEGKTTCSLCSRLRRGTLYGFAQRIGATKIALGHHRDDIIETLFLNMFYGGKMKAMPPKLLSDDGANVVIRPLAYCREKDIAEYAELKQFPIIPCNLCGSQENLKRAAVKDMLKQWDRQHPGRIETIFTAMQNTAPSQGVDREQFDFVSLKQDPNAEFRGDVAEADLPAFDFMDTANSGHINLDDASKRQGTRIDVVSTFTP</sequence>
<feature type="chain" id="PRO_0000348831" description="tRNA-cytidine(32) 2-sulfurtransferase">
    <location>
        <begin position="1"/>
        <end position="319"/>
    </location>
</feature>
<feature type="short sequence motif" description="PP-loop motif" evidence="1">
    <location>
        <begin position="49"/>
        <end position="54"/>
    </location>
</feature>
<feature type="binding site" evidence="1">
    <location>
        <position position="124"/>
    </location>
    <ligand>
        <name>[4Fe-4S] cluster</name>
        <dbReference type="ChEBI" id="CHEBI:49883"/>
    </ligand>
</feature>
<feature type="binding site" evidence="1">
    <location>
        <position position="127"/>
    </location>
    <ligand>
        <name>[4Fe-4S] cluster</name>
        <dbReference type="ChEBI" id="CHEBI:49883"/>
    </ligand>
</feature>
<feature type="binding site" evidence="1">
    <location>
        <position position="215"/>
    </location>
    <ligand>
        <name>[4Fe-4S] cluster</name>
        <dbReference type="ChEBI" id="CHEBI:49883"/>
    </ligand>
</feature>
<evidence type="ECO:0000255" key="1">
    <source>
        <dbReference type="HAMAP-Rule" id="MF_01850"/>
    </source>
</evidence>
<gene>
    <name evidence="1" type="primary">ttcA</name>
    <name type="ordered locus">Sama_1801</name>
</gene>
<name>TTCA_SHEAM</name>
<organism>
    <name type="scientific">Shewanella amazonensis (strain ATCC BAA-1098 / SB2B)</name>
    <dbReference type="NCBI Taxonomy" id="326297"/>
    <lineage>
        <taxon>Bacteria</taxon>
        <taxon>Pseudomonadati</taxon>
        <taxon>Pseudomonadota</taxon>
        <taxon>Gammaproteobacteria</taxon>
        <taxon>Alteromonadales</taxon>
        <taxon>Shewanellaceae</taxon>
        <taxon>Shewanella</taxon>
    </lineage>
</organism>
<protein>
    <recommendedName>
        <fullName evidence="1">tRNA-cytidine(32) 2-sulfurtransferase</fullName>
        <ecNumber evidence="1">2.8.1.-</ecNumber>
    </recommendedName>
    <alternativeName>
        <fullName evidence="1">Two-thiocytidine biosynthesis protein A</fullName>
    </alternativeName>
    <alternativeName>
        <fullName evidence="1">tRNA 2-thiocytidine biosynthesis protein TtcA</fullName>
    </alternativeName>
</protein>
<keyword id="KW-0004">4Fe-4S</keyword>
<keyword id="KW-0067">ATP-binding</keyword>
<keyword id="KW-0963">Cytoplasm</keyword>
<keyword id="KW-0408">Iron</keyword>
<keyword id="KW-0411">Iron-sulfur</keyword>
<keyword id="KW-0460">Magnesium</keyword>
<keyword id="KW-0479">Metal-binding</keyword>
<keyword id="KW-0547">Nucleotide-binding</keyword>
<keyword id="KW-1185">Reference proteome</keyword>
<keyword id="KW-0694">RNA-binding</keyword>
<keyword id="KW-0808">Transferase</keyword>
<keyword id="KW-0819">tRNA processing</keyword>
<keyword id="KW-0820">tRNA-binding</keyword>
<comment type="function">
    <text evidence="1">Catalyzes the ATP-dependent 2-thiolation of cytidine in position 32 of tRNA, to form 2-thiocytidine (s(2)C32). The sulfur atoms are provided by the cysteine/cysteine desulfurase (IscS) system.</text>
</comment>
<comment type="catalytic activity">
    <reaction evidence="1">
        <text>cytidine(32) in tRNA + S-sulfanyl-L-cysteinyl-[cysteine desulfurase] + AH2 + ATP = 2-thiocytidine(32) in tRNA + L-cysteinyl-[cysteine desulfurase] + A + AMP + diphosphate + H(+)</text>
        <dbReference type="Rhea" id="RHEA:57048"/>
        <dbReference type="Rhea" id="RHEA-COMP:10288"/>
        <dbReference type="Rhea" id="RHEA-COMP:12157"/>
        <dbReference type="Rhea" id="RHEA-COMP:12158"/>
        <dbReference type="Rhea" id="RHEA-COMP:14821"/>
        <dbReference type="ChEBI" id="CHEBI:13193"/>
        <dbReference type="ChEBI" id="CHEBI:15378"/>
        <dbReference type="ChEBI" id="CHEBI:17499"/>
        <dbReference type="ChEBI" id="CHEBI:29950"/>
        <dbReference type="ChEBI" id="CHEBI:30616"/>
        <dbReference type="ChEBI" id="CHEBI:33019"/>
        <dbReference type="ChEBI" id="CHEBI:61963"/>
        <dbReference type="ChEBI" id="CHEBI:82748"/>
        <dbReference type="ChEBI" id="CHEBI:141453"/>
        <dbReference type="ChEBI" id="CHEBI:456215"/>
    </reaction>
    <physiologicalReaction direction="left-to-right" evidence="1">
        <dbReference type="Rhea" id="RHEA:57049"/>
    </physiologicalReaction>
</comment>
<comment type="cofactor">
    <cofactor evidence="1">
        <name>Mg(2+)</name>
        <dbReference type="ChEBI" id="CHEBI:18420"/>
    </cofactor>
</comment>
<comment type="cofactor">
    <cofactor evidence="1">
        <name>[4Fe-4S] cluster</name>
        <dbReference type="ChEBI" id="CHEBI:49883"/>
    </cofactor>
    <text evidence="1">Binds 1 [4Fe-4S] cluster per subunit. The cluster is chelated by three Cys residues, the fourth Fe has a free coordination site that may bind a sulfur atom transferred from the persulfide of IscS.</text>
</comment>
<comment type="pathway">
    <text evidence="1">tRNA modification.</text>
</comment>
<comment type="subunit">
    <text evidence="1">Homodimer.</text>
</comment>
<comment type="subcellular location">
    <subcellularLocation>
        <location evidence="1">Cytoplasm</location>
    </subcellularLocation>
</comment>
<comment type="miscellaneous">
    <text evidence="1">The thiolation reaction likely consists of two steps: a first activation step by ATP to form an adenylated intermediate of the target base of tRNA, and a second nucleophilic substitution step of the sulfur (S) atom supplied by the hydrosulfide attached to the Fe-S cluster.</text>
</comment>
<comment type="similarity">
    <text evidence="1">Belongs to the TtcA family.</text>
</comment>
<dbReference type="EC" id="2.8.1.-" evidence="1"/>
<dbReference type="EMBL" id="CP000507">
    <property type="protein sequence ID" value="ABM00007.1"/>
    <property type="molecule type" value="Genomic_DNA"/>
</dbReference>
<dbReference type="RefSeq" id="WP_011759914.1">
    <property type="nucleotide sequence ID" value="NC_008700.1"/>
</dbReference>
<dbReference type="SMR" id="A1S6K0"/>
<dbReference type="STRING" id="326297.Sama_1801"/>
<dbReference type="KEGG" id="saz:Sama_1801"/>
<dbReference type="eggNOG" id="COG0037">
    <property type="taxonomic scope" value="Bacteria"/>
</dbReference>
<dbReference type="HOGENOM" id="CLU_026481_0_0_6"/>
<dbReference type="Proteomes" id="UP000009175">
    <property type="component" value="Chromosome"/>
</dbReference>
<dbReference type="GO" id="GO:0005737">
    <property type="term" value="C:cytoplasm"/>
    <property type="evidence" value="ECO:0007669"/>
    <property type="project" value="UniProtKB-SubCell"/>
</dbReference>
<dbReference type="GO" id="GO:0051539">
    <property type="term" value="F:4 iron, 4 sulfur cluster binding"/>
    <property type="evidence" value="ECO:0007669"/>
    <property type="project" value="UniProtKB-UniRule"/>
</dbReference>
<dbReference type="GO" id="GO:0005524">
    <property type="term" value="F:ATP binding"/>
    <property type="evidence" value="ECO:0007669"/>
    <property type="project" value="UniProtKB-UniRule"/>
</dbReference>
<dbReference type="GO" id="GO:0000287">
    <property type="term" value="F:magnesium ion binding"/>
    <property type="evidence" value="ECO:0007669"/>
    <property type="project" value="UniProtKB-UniRule"/>
</dbReference>
<dbReference type="GO" id="GO:0016783">
    <property type="term" value="F:sulfurtransferase activity"/>
    <property type="evidence" value="ECO:0007669"/>
    <property type="project" value="UniProtKB-UniRule"/>
</dbReference>
<dbReference type="GO" id="GO:0000049">
    <property type="term" value="F:tRNA binding"/>
    <property type="evidence" value="ECO:0007669"/>
    <property type="project" value="UniProtKB-KW"/>
</dbReference>
<dbReference type="GO" id="GO:0034227">
    <property type="term" value="P:tRNA thio-modification"/>
    <property type="evidence" value="ECO:0007669"/>
    <property type="project" value="UniProtKB-UniRule"/>
</dbReference>
<dbReference type="CDD" id="cd24138">
    <property type="entry name" value="TtcA-like"/>
    <property type="match status" value="1"/>
</dbReference>
<dbReference type="Gene3D" id="3.40.50.620">
    <property type="entry name" value="HUPs"/>
    <property type="match status" value="1"/>
</dbReference>
<dbReference type="HAMAP" id="MF_01850">
    <property type="entry name" value="TtcA"/>
    <property type="match status" value="1"/>
</dbReference>
<dbReference type="InterPro" id="IPR014729">
    <property type="entry name" value="Rossmann-like_a/b/a_fold"/>
</dbReference>
<dbReference type="InterPro" id="IPR011063">
    <property type="entry name" value="TilS/TtcA_N"/>
</dbReference>
<dbReference type="InterPro" id="IPR012089">
    <property type="entry name" value="tRNA_Cyd_32_2_STrfase"/>
</dbReference>
<dbReference type="NCBIfam" id="NF007972">
    <property type="entry name" value="PRK10696.1"/>
    <property type="match status" value="1"/>
</dbReference>
<dbReference type="PANTHER" id="PTHR43686:SF1">
    <property type="entry name" value="AMINOTRAN_5 DOMAIN-CONTAINING PROTEIN"/>
    <property type="match status" value="1"/>
</dbReference>
<dbReference type="PANTHER" id="PTHR43686">
    <property type="entry name" value="SULFURTRANSFERASE-RELATED"/>
    <property type="match status" value="1"/>
</dbReference>
<dbReference type="Pfam" id="PF01171">
    <property type="entry name" value="ATP_bind_3"/>
    <property type="match status" value="1"/>
</dbReference>
<dbReference type="SUPFAM" id="SSF52402">
    <property type="entry name" value="Adenine nucleotide alpha hydrolases-like"/>
    <property type="match status" value="1"/>
</dbReference>
<accession>A1S6K0</accession>